<gene>
    <name evidence="8" type="primary">PAM16L1</name>
    <name evidence="7" type="synonym">MUSE5L</name>
    <name evidence="7" type="synonym">PAM16L</name>
    <name evidence="10" type="ordered locus">At5g61880</name>
    <name evidence="11" type="ORF">MAC9.20</name>
</gene>
<reference key="1">
    <citation type="journal article" date="1998" name="DNA Res.">
        <title>Structural analysis of Arabidopsis thaliana chromosome 5. IV. Sequence features of the regions of 1,456,315 bp covered by nineteen physically assigned P1 and TAC clones.</title>
        <authorList>
            <person name="Sato S."/>
            <person name="Kaneko T."/>
            <person name="Kotani H."/>
            <person name="Nakamura Y."/>
            <person name="Asamizu E."/>
            <person name="Miyajima N."/>
            <person name="Tabata S."/>
        </authorList>
    </citation>
    <scope>NUCLEOTIDE SEQUENCE [LARGE SCALE GENOMIC DNA]</scope>
    <source>
        <strain>cv. Columbia</strain>
    </source>
</reference>
<reference key="2">
    <citation type="journal article" date="2017" name="Plant J.">
        <title>Araport11: a complete reannotation of the Arabidopsis thaliana reference genome.</title>
        <authorList>
            <person name="Cheng C.Y."/>
            <person name="Krishnakumar V."/>
            <person name="Chan A.P."/>
            <person name="Thibaud-Nissen F."/>
            <person name="Schobel S."/>
            <person name="Town C.D."/>
        </authorList>
    </citation>
    <scope>GENOME REANNOTATION</scope>
    <source>
        <strain>cv. Columbia</strain>
    </source>
</reference>
<reference key="3">
    <citation type="journal article" date="2003" name="Science">
        <title>Empirical analysis of transcriptional activity in the Arabidopsis genome.</title>
        <authorList>
            <person name="Yamada K."/>
            <person name="Lim J."/>
            <person name="Dale J.M."/>
            <person name="Chen H."/>
            <person name="Shinn P."/>
            <person name="Palm C.J."/>
            <person name="Southwick A.M."/>
            <person name="Wu H.C."/>
            <person name="Kim C.J."/>
            <person name="Nguyen M."/>
            <person name="Pham P.K."/>
            <person name="Cheuk R.F."/>
            <person name="Karlin-Newmann G."/>
            <person name="Liu S.X."/>
            <person name="Lam B."/>
            <person name="Sakano H."/>
            <person name="Wu T."/>
            <person name="Yu G."/>
            <person name="Miranda M."/>
            <person name="Quach H.L."/>
            <person name="Tripp M."/>
            <person name="Chang C.H."/>
            <person name="Lee J.M."/>
            <person name="Toriumi M.J."/>
            <person name="Chan M.M."/>
            <person name="Tang C.C."/>
            <person name="Onodera C.S."/>
            <person name="Deng J.M."/>
            <person name="Akiyama K."/>
            <person name="Ansari Y."/>
            <person name="Arakawa T."/>
            <person name="Banh J."/>
            <person name="Banno F."/>
            <person name="Bowser L."/>
            <person name="Brooks S.Y."/>
            <person name="Carninci P."/>
            <person name="Chao Q."/>
            <person name="Choy N."/>
            <person name="Enju A."/>
            <person name="Goldsmith A.D."/>
            <person name="Gurjal M."/>
            <person name="Hansen N.F."/>
            <person name="Hayashizaki Y."/>
            <person name="Johnson-Hopson C."/>
            <person name="Hsuan V.W."/>
            <person name="Iida K."/>
            <person name="Karnes M."/>
            <person name="Khan S."/>
            <person name="Koesema E."/>
            <person name="Ishida J."/>
            <person name="Jiang P.X."/>
            <person name="Jones T."/>
            <person name="Kawai J."/>
            <person name="Kamiya A."/>
            <person name="Meyers C."/>
            <person name="Nakajima M."/>
            <person name="Narusaka M."/>
            <person name="Seki M."/>
            <person name="Sakurai T."/>
            <person name="Satou M."/>
            <person name="Tamse R."/>
            <person name="Vaysberg M."/>
            <person name="Wallender E.K."/>
            <person name="Wong C."/>
            <person name="Yamamura Y."/>
            <person name="Yuan S."/>
            <person name="Shinozaki K."/>
            <person name="Davis R.W."/>
            <person name="Theologis A."/>
            <person name="Ecker J.R."/>
        </authorList>
    </citation>
    <scope>NUCLEOTIDE SEQUENCE [LARGE SCALE MRNA]</scope>
    <source>
        <strain>cv. Columbia</strain>
    </source>
</reference>
<reference key="4">
    <citation type="submission" date="2002-03" db="EMBL/GenBank/DDBJ databases">
        <title>Full-length cDNA from Arabidopsis thaliana.</title>
        <authorList>
            <person name="Brover V.V."/>
            <person name="Troukhan M.E."/>
            <person name="Alexandrov N.A."/>
            <person name="Lu Y.-P."/>
            <person name="Flavell R.B."/>
            <person name="Feldmann K.A."/>
        </authorList>
    </citation>
    <scope>NUCLEOTIDE SEQUENCE [LARGE SCALE MRNA]</scope>
</reference>
<reference key="5">
    <citation type="journal article" date="2013" name="Nat. Commun.">
        <title>Mitochondrial AtPAM16 is required for plant survival and the negative regulation of plant immunity.</title>
        <authorList>
            <person name="Huang Y."/>
            <person name="Chen X."/>
            <person name="Liu Y."/>
            <person name="Roth C."/>
            <person name="Copeland C."/>
            <person name="McFarlane H.E."/>
            <person name="Huang S."/>
            <person name="Lipka V."/>
            <person name="Wiermer M."/>
            <person name="Li X."/>
        </authorList>
    </citation>
    <scope>DISRUPTION PHENOTYPE</scope>
    <source>
        <strain>cv. Columbia</strain>
    </source>
</reference>
<reference key="6">
    <citation type="journal article" date="2013" name="PLoS ONE">
        <title>Comparative analysis of putative orthologues of mitochondrial import motor subunit: Pam18 and Pam16 in plants.</title>
        <authorList>
            <person name="Chen X."/>
            <person name="Ghazanfar B."/>
            <person name="Khan A.R."/>
            <person name="Hayat S."/>
            <person name="Cheng Z."/>
        </authorList>
    </citation>
    <scope>DEVELOPMENTAL STAGE</scope>
    <scope>TISSUE SPECIFICITY</scope>
    <scope>INDUCTION BY HEAT AND SALT</scope>
    <scope>GENE FAMILY</scope>
    <scope>NOMENCLATURE</scope>
    <scope>REVIEW</scope>
</reference>
<name>TM16A_ARATH</name>
<keyword id="KW-0472">Membrane</keyword>
<keyword id="KW-0496">Mitochondrion</keyword>
<keyword id="KW-0999">Mitochondrion inner membrane</keyword>
<keyword id="KW-0653">Protein transport</keyword>
<keyword id="KW-1185">Reference proteome</keyword>
<keyword id="KW-0809">Transit peptide</keyword>
<keyword id="KW-0811">Translocation</keyword>
<keyword id="KW-0813">Transport</keyword>
<accession>Q93W66</accession>
<accession>Q9FLS3</accession>
<dbReference type="EMBL" id="AB010069">
    <property type="protein sequence ID" value="BAB10087.1"/>
    <property type="status" value="ALT_SEQ"/>
    <property type="molecule type" value="Genomic_DNA"/>
</dbReference>
<dbReference type="EMBL" id="CP002688">
    <property type="protein sequence ID" value="AED97527.1"/>
    <property type="molecule type" value="Genomic_DNA"/>
</dbReference>
<dbReference type="EMBL" id="CP002688">
    <property type="protein sequence ID" value="AED97528.1"/>
    <property type="molecule type" value="Genomic_DNA"/>
</dbReference>
<dbReference type="EMBL" id="AY039584">
    <property type="protein sequence ID" value="AAK62639.1"/>
    <property type="molecule type" value="mRNA"/>
</dbReference>
<dbReference type="EMBL" id="AY054150">
    <property type="protein sequence ID" value="AAL06811.1"/>
    <property type="molecule type" value="mRNA"/>
</dbReference>
<dbReference type="EMBL" id="AY085331">
    <property type="protein sequence ID" value="AAM62562.1"/>
    <property type="molecule type" value="mRNA"/>
</dbReference>
<dbReference type="RefSeq" id="NP_001331745.1">
    <property type="nucleotide sequence ID" value="NM_001345501.1"/>
</dbReference>
<dbReference type="RefSeq" id="NP_568943.1">
    <property type="nucleotide sequence ID" value="NM_125581.2"/>
</dbReference>
<dbReference type="RefSeq" id="NP_851243.1">
    <property type="nucleotide sequence ID" value="NM_180912.3"/>
</dbReference>
<dbReference type="SMR" id="Q93W66"/>
<dbReference type="FunCoup" id="Q93W66">
    <property type="interactions" value="2043"/>
</dbReference>
<dbReference type="STRING" id="3702.Q93W66"/>
<dbReference type="PaxDb" id="3702-AT5G61880.1"/>
<dbReference type="ProteomicsDB" id="234283"/>
<dbReference type="EnsemblPlants" id="AT5G61880.1">
    <property type="protein sequence ID" value="AT5G61880.1"/>
    <property type="gene ID" value="AT5G61880"/>
</dbReference>
<dbReference type="EnsemblPlants" id="AT5G61880.2">
    <property type="protein sequence ID" value="AT5G61880.2"/>
    <property type="gene ID" value="AT5G61880"/>
</dbReference>
<dbReference type="GeneID" id="836309"/>
<dbReference type="Gramene" id="AT5G61880.1">
    <property type="protein sequence ID" value="AT5G61880.1"/>
    <property type="gene ID" value="AT5G61880"/>
</dbReference>
<dbReference type="Gramene" id="AT5G61880.2">
    <property type="protein sequence ID" value="AT5G61880.2"/>
    <property type="gene ID" value="AT5G61880"/>
</dbReference>
<dbReference type="KEGG" id="ath:AT5G61880"/>
<dbReference type="Araport" id="AT5G61880"/>
<dbReference type="TAIR" id="AT5G61880">
    <property type="gene designation" value="PAM16L"/>
</dbReference>
<dbReference type="eggNOG" id="KOG3442">
    <property type="taxonomic scope" value="Eukaryota"/>
</dbReference>
<dbReference type="HOGENOM" id="CLU_101461_2_0_1"/>
<dbReference type="InParanoid" id="Q93W66"/>
<dbReference type="OMA" id="MAYKQAI"/>
<dbReference type="PhylomeDB" id="Q93W66"/>
<dbReference type="PRO" id="PR:Q93W66"/>
<dbReference type="Proteomes" id="UP000006548">
    <property type="component" value="Chromosome 5"/>
</dbReference>
<dbReference type="ExpressionAtlas" id="Q93W66">
    <property type="expression patterns" value="baseline and differential"/>
</dbReference>
<dbReference type="GO" id="GO:0005743">
    <property type="term" value="C:mitochondrial inner membrane"/>
    <property type="evidence" value="ECO:0000250"/>
    <property type="project" value="UniProtKB"/>
</dbReference>
<dbReference type="GO" id="GO:0005744">
    <property type="term" value="C:TIM23 mitochondrial import inner membrane translocase complex"/>
    <property type="evidence" value="ECO:0007669"/>
    <property type="project" value="InterPro"/>
</dbReference>
<dbReference type="GO" id="GO:0031348">
    <property type="term" value="P:negative regulation of defense response"/>
    <property type="evidence" value="ECO:0000315"/>
    <property type="project" value="TAIR"/>
</dbReference>
<dbReference type="GO" id="GO:0030150">
    <property type="term" value="P:protein import into mitochondrial matrix"/>
    <property type="evidence" value="ECO:0007669"/>
    <property type="project" value="InterPro"/>
</dbReference>
<dbReference type="FunFam" id="1.10.287.110:FF:000006">
    <property type="entry name" value="Import inner membrane translocase subunit TIM16"/>
    <property type="match status" value="1"/>
</dbReference>
<dbReference type="Gene3D" id="1.10.287.110">
    <property type="entry name" value="DnaJ domain"/>
    <property type="match status" value="1"/>
</dbReference>
<dbReference type="InterPro" id="IPR036869">
    <property type="entry name" value="J_dom_sf"/>
</dbReference>
<dbReference type="InterPro" id="IPR005341">
    <property type="entry name" value="Tim16"/>
</dbReference>
<dbReference type="PANTHER" id="PTHR12388">
    <property type="entry name" value="MITOCHONDRIA ASSOCIATED GRANULOCYTE MACROPHAGE CSF SIGNALING MOLECULE"/>
    <property type="match status" value="1"/>
</dbReference>
<dbReference type="PANTHER" id="PTHR12388:SF6">
    <property type="entry name" value="MITOCHONDRIAL IMPORT INNER MEMBRANE TRANSLOCASE SUBUNIT PAM16 LIKE 1"/>
    <property type="match status" value="1"/>
</dbReference>
<dbReference type="Pfam" id="PF03656">
    <property type="entry name" value="Pam16"/>
    <property type="match status" value="1"/>
</dbReference>
<evidence type="ECO:0000250" key="1">
    <source>
        <dbReference type="UniProtKB" id="P42949"/>
    </source>
</evidence>
<evidence type="ECO:0000250" key="2">
    <source>
        <dbReference type="UniProtKB" id="Q93VV9"/>
    </source>
</evidence>
<evidence type="ECO:0000250" key="3">
    <source>
        <dbReference type="UniProtKB" id="Q9Y3D7"/>
    </source>
</evidence>
<evidence type="ECO:0000255" key="4"/>
<evidence type="ECO:0000269" key="5">
    <source>
    </source>
</evidence>
<evidence type="ECO:0000269" key="6">
    <source>
    </source>
</evidence>
<evidence type="ECO:0000303" key="7">
    <source>
    </source>
</evidence>
<evidence type="ECO:0000303" key="8">
    <source>
    </source>
</evidence>
<evidence type="ECO:0000305" key="9"/>
<evidence type="ECO:0000312" key="10">
    <source>
        <dbReference type="Araport" id="AT5G61880"/>
    </source>
</evidence>
<evidence type="ECO:0000312" key="11">
    <source>
        <dbReference type="EMBL" id="BAB10087.1"/>
    </source>
</evidence>
<sequence>MAARVLASVIVMGSGIIARACTQAYRQALANASKTGVAHEATQTIKRGLTIGEAEARQILGVTEKSSWDEILKKYDTLFERNAQNGSFYLQSKVHRAKECLETAYQKSTTTSA</sequence>
<proteinExistence type="evidence at transcript level"/>
<feature type="transit peptide" description="Mitochondrion" evidence="4">
    <location>
        <begin position="1"/>
        <end position="48"/>
    </location>
</feature>
<feature type="chain" id="PRO_0000437996" description="Mitochondrial import inner membrane translocase subunit PAM16 like 1">
    <location>
        <begin position="49"/>
        <end position="113"/>
    </location>
</feature>
<feature type="region of interest" description="J-like" evidence="1">
    <location>
        <begin position="55"/>
        <end position="104"/>
    </location>
</feature>
<protein>
    <recommendedName>
        <fullName evidence="8">Mitochondrial import inner membrane translocase subunit PAM16 like 1</fullName>
        <shortName evidence="7">AtPAM16L</shortName>
        <shortName evidence="8">AtPAM16L1</shortName>
    </recommendedName>
    <alternativeName>
        <fullName evidence="1">Presequence translocated-associated motor subunit PAM16L</fullName>
    </alternativeName>
    <alternativeName>
        <fullName evidence="7">Protein MUTANT SNC1-ENHANCING 5 LIKE</fullName>
    </alternativeName>
</protein>
<organism>
    <name type="scientific">Arabidopsis thaliana</name>
    <name type="common">Mouse-ear cress</name>
    <dbReference type="NCBI Taxonomy" id="3702"/>
    <lineage>
        <taxon>Eukaryota</taxon>
        <taxon>Viridiplantae</taxon>
        <taxon>Streptophyta</taxon>
        <taxon>Embryophyta</taxon>
        <taxon>Tracheophyta</taxon>
        <taxon>Spermatophyta</taxon>
        <taxon>Magnoliopsida</taxon>
        <taxon>eudicotyledons</taxon>
        <taxon>Gunneridae</taxon>
        <taxon>Pentapetalae</taxon>
        <taxon>rosids</taxon>
        <taxon>malvids</taxon>
        <taxon>Brassicales</taxon>
        <taxon>Brassicaceae</taxon>
        <taxon>Camelineae</taxon>
        <taxon>Arabidopsis</taxon>
    </lineage>
</organism>
<comment type="function">
    <text evidence="3">Regulates ATP-dependent protein translocation into the mitochondrial matrix.</text>
</comment>
<comment type="subcellular location">
    <subcellularLocation>
        <location evidence="2">Mitochondrion inner membrane</location>
        <topology evidence="2">Peripheral membrane protein</topology>
    </subcellularLocation>
</comment>
<comment type="tissue specificity">
    <text evidence="6">Expressed at low levels in seedlings, rosettes and inflorescence.</text>
</comment>
<comment type="developmental stage">
    <text evidence="6">Accumulates during senescence.</text>
</comment>
<comment type="induction">
    <text evidence="6">Induced by heat and salt stresses.</text>
</comment>
<comment type="disruption phenotype">
    <text evidence="5">No visible phenotype and normal sensitivity to pathogens, but higher expression of pathogenesis related genes PR-1 and PR-2 in Atpam16l. The double mutant Atpam16-1 Atpam16l is lethal.</text>
</comment>
<comment type="similarity">
    <text evidence="9">Belongs to the TIM16/PAM16 family.</text>
</comment>
<comment type="sequence caution" evidence="9">
    <conflict type="erroneous gene model prediction">
        <sequence resource="EMBL-CDS" id="BAB10087"/>
    </conflict>
</comment>